<name>URE1_SYNJB</name>
<sequence>MTLEIPRRQYVSNYGPTVGDRVRLADTELIIEVEEDFTTYGEEIKFGGGKTIRDGMGQSPTATRANGALDLVITNALILDWWGIVKADVGIRDGYIVGIGKAGNPNIQAGVTPGMVVGPSTEVIAGENLILTAGGIDAHVHFICPQLCEFAIASGVTTLLGGGTGPATGSNATTCTPGAWNLGKMLQAAEGFPVNLGFFGKGNAAFPAALREQVEAGACGLKIHEDWGSTPAVIDSCLQVADEYDIQTLIHTDTLNESAFVEDTIAAINGRTIHTFHTEGAGGGHAPDIIRIASEPNVLPSSTNPTRPFTRNTIEEHLDMLMVCHHLSKNVPEDIAFAESRIRPQTIAAEDILHDMGVFSIISSDSQAMGRVGEVIIRTWQTAHKMKVQRGPLPQDSSRNDNFRAKRYVAKYTICPAIAQGLSHVIGSVEVGKLADLCLWKPAFFGVKPEIVLKGGLIAYAQMGDPNASIPTPQPVYPRPMFGSFGRALTETSLLFVSQAALDLGIPEKLGIQRRAVAVKNCREIGKADLKLNTATPHIEVNPETYEVRADGELLTCEPAEVLPMAQRYFLF</sequence>
<accession>Q2JQ88</accession>
<comment type="catalytic activity">
    <reaction evidence="1">
        <text>urea + 2 H2O + H(+) = hydrogencarbonate + 2 NH4(+)</text>
        <dbReference type="Rhea" id="RHEA:20557"/>
        <dbReference type="ChEBI" id="CHEBI:15377"/>
        <dbReference type="ChEBI" id="CHEBI:15378"/>
        <dbReference type="ChEBI" id="CHEBI:16199"/>
        <dbReference type="ChEBI" id="CHEBI:17544"/>
        <dbReference type="ChEBI" id="CHEBI:28938"/>
        <dbReference type="EC" id="3.5.1.5"/>
    </reaction>
</comment>
<comment type="cofactor">
    <cofactor evidence="1">
        <name>Ni cation</name>
        <dbReference type="ChEBI" id="CHEBI:25516"/>
    </cofactor>
    <text evidence="1">Binds 2 nickel ions per subunit.</text>
</comment>
<comment type="pathway">
    <text evidence="1">Nitrogen metabolism; urea degradation; CO(2) and NH(3) from urea (urease route): step 1/1.</text>
</comment>
<comment type="subunit">
    <text evidence="1">Heterotrimer of UreA (gamma), UreB (beta) and UreC (alpha) subunits. Three heterotrimers associate to form the active enzyme.</text>
</comment>
<comment type="subcellular location">
    <subcellularLocation>
        <location evidence="1">Cytoplasm</location>
    </subcellularLocation>
</comment>
<comment type="PTM">
    <text evidence="1">Carboxylation allows a single lysine to coordinate two nickel ions.</text>
</comment>
<comment type="similarity">
    <text evidence="1">Belongs to the metallo-dependent hydrolases superfamily. Urease alpha subunit family.</text>
</comment>
<reference key="1">
    <citation type="journal article" date="2007" name="ISME J.">
        <title>Population level functional diversity in a microbial community revealed by comparative genomic and metagenomic analyses.</title>
        <authorList>
            <person name="Bhaya D."/>
            <person name="Grossman A.R."/>
            <person name="Steunou A.-S."/>
            <person name="Khuri N."/>
            <person name="Cohan F.M."/>
            <person name="Hamamura N."/>
            <person name="Melendrez M.C."/>
            <person name="Bateson M.M."/>
            <person name="Ward D.M."/>
            <person name="Heidelberg J.F."/>
        </authorList>
    </citation>
    <scope>NUCLEOTIDE SEQUENCE [LARGE SCALE GENOMIC DNA]</scope>
    <source>
        <strain>JA-2-3B'a(2-13)</strain>
    </source>
</reference>
<keyword id="KW-0963">Cytoplasm</keyword>
<keyword id="KW-0378">Hydrolase</keyword>
<keyword id="KW-0479">Metal-binding</keyword>
<keyword id="KW-0533">Nickel</keyword>
<keyword id="KW-1185">Reference proteome</keyword>
<dbReference type="EC" id="3.5.1.5" evidence="1"/>
<dbReference type="EMBL" id="CP000240">
    <property type="protein sequence ID" value="ABD01024.1"/>
    <property type="molecule type" value="Genomic_DNA"/>
</dbReference>
<dbReference type="RefSeq" id="WP_011431695.1">
    <property type="nucleotide sequence ID" value="NC_007776.1"/>
</dbReference>
<dbReference type="SMR" id="Q2JQ88"/>
<dbReference type="STRING" id="321332.CYB_0023"/>
<dbReference type="KEGG" id="cyb:CYB_0023"/>
<dbReference type="eggNOG" id="COG0804">
    <property type="taxonomic scope" value="Bacteria"/>
</dbReference>
<dbReference type="HOGENOM" id="CLU_000980_0_0_3"/>
<dbReference type="OrthoDB" id="9802793at2"/>
<dbReference type="UniPathway" id="UPA00258">
    <property type="reaction ID" value="UER00370"/>
</dbReference>
<dbReference type="Proteomes" id="UP000001938">
    <property type="component" value="Chromosome"/>
</dbReference>
<dbReference type="GO" id="GO:0005737">
    <property type="term" value="C:cytoplasm"/>
    <property type="evidence" value="ECO:0007669"/>
    <property type="project" value="UniProtKB-SubCell"/>
</dbReference>
<dbReference type="GO" id="GO:0016151">
    <property type="term" value="F:nickel cation binding"/>
    <property type="evidence" value="ECO:0007669"/>
    <property type="project" value="UniProtKB-UniRule"/>
</dbReference>
<dbReference type="GO" id="GO:0009039">
    <property type="term" value="F:urease activity"/>
    <property type="evidence" value="ECO:0007669"/>
    <property type="project" value="UniProtKB-UniRule"/>
</dbReference>
<dbReference type="GO" id="GO:0043419">
    <property type="term" value="P:urea catabolic process"/>
    <property type="evidence" value="ECO:0007669"/>
    <property type="project" value="UniProtKB-UniRule"/>
</dbReference>
<dbReference type="CDD" id="cd00375">
    <property type="entry name" value="Urease_alpha"/>
    <property type="match status" value="1"/>
</dbReference>
<dbReference type="Gene3D" id="3.20.20.140">
    <property type="entry name" value="Metal-dependent hydrolases"/>
    <property type="match status" value="1"/>
</dbReference>
<dbReference type="Gene3D" id="2.30.40.10">
    <property type="entry name" value="Urease, subunit C, domain 1"/>
    <property type="match status" value="1"/>
</dbReference>
<dbReference type="HAMAP" id="MF_01953">
    <property type="entry name" value="Urease_alpha"/>
    <property type="match status" value="1"/>
</dbReference>
<dbReference type="InterPro" id="IPR006680">
    <property type="entry name" value="Amidohydro-rel"/>
</dbReference>
<dbReference type="InterPro" id="IPR011059">
    <property type="entry name" value="Metal-dep_hydrolase_composite"/>
</dbReference>
<dbReference type="InterPro" id="IPR032466">
    <property type="entry name" value="Metal_Hydrolase"/>
</dbReference>
<dbReference type="InterPro" id="IPR011612">
    <property type="entry name" value="Urease_alpha_N_dom"/>
</dbReference>
<dbReference type="InterPro" id="IPR050112">
    <property type="entry name" value="Urease_alpha_subunit"/>
</dbReference>
<dbReference type="InterPro" id="IPR017950">
    <property type="entry name" value="Urease_AS"/>
</dbReference>
<dbReference type="InterPro" id="IPR005848">
    <property type="entry name" value="Urease_asu"/>
</dbReference>
<dbReference type="InterPro" id="IPR017951">
    <property type="entry name" value="Urease_asu_c"/>
</dbReference>
<dbReference type="InterPro" id="IPR029754">
    <property type="entry name" value="Urease_Ni-bd"/>
</dbReference>
<dbReference type="NCBIfam" id="NF009685">
    <property type="entry name" value="PRK13206.1"/>
    <property type="match status" value="1"/>
</dbReference>
<dbReference type="NCBIfam" id="NF009686">
    <property type="entry name" value="PRK13207.1"/>
    <property type="match status" value="1"/>
</dbReference>
<dbReference type="NCBIfam" id="TIGR01792">
    <property type="entry name" value="urease_alph"/>
    <property type="match status" value="1"/>
</dbReference>
<dbReference type="PANTHER" id="PTHR43440">
    <property type="entry name" value="UREASE"/>
    <property type="match status" value="1"/>
</dbReference>
<dbReference type="PANTHER" id="PTHR43440:SF1">
    <property type="entry name" value="UREASE"/>
    <property type="match status" value="1"/>
</dbReference>
<dbReference type="Pfam" id="PF01979">
    <property type="entry name" value="Amidohydro_1"/>
    <property type="match status" value="1"/>
</dbReference>
<dbReference type="Pfam" id="PF00449">
    <property type="entry name" value="Urease_alpha"/>
    <property type="match status" value="1"/>
</dbReference>
<dbReference type="PRINTS" id="PR01752">
    <property type="entry name" value="UREASE"/>
</dbReference>
<dbReference type="SUPFAM" id="SSF51338">
    <property type="entry name" value="Composite domain of metallo-dependent hydrolases"/>
    <property type="match status" value="2"/>
</dbReference>
<dbReference type="SUPFAM" id="SSF51556">
    <property type="entry name" value="Metallo-dependent hydrolases"/>
    <property type="match status" value="1"/>
</dbReference>
<dbReference type="PROSITE" id="PS01120">
    <property type="entry name" value="UREASE_1"/>
    <property type="match status" value="1"/>
</dbReference>
<dbReference type="PROSITE" id="PS00145">
    <property type="entry name" value="UREASE_2"/>
    <property type="match status" value="1"/>
</dbReference>
<dbReference type="PROSITE" id="PS51368">
    <property type="entry name" value="UREASE_3"/>
    <property type="match status" value="1"/>
</dbReference>
<feature type="chain" id="PRO_0000239890" description="Urease subunit alpha">
    <location>
        <begin position="1"/>
        <end position="572"/>
    </location>
</feature>
<feature type="domain" description="Urease" evidence="1">
    <location>
        <begin position="134"/>
        <end position="572"/>
    </location>
</feature>
<feature type="active site" description="Proton donor" evidence="1">
    <location>
        <position position="325"/>
    </location>
</feature>
<feature type="binding site" evidence="1">
    <location>
        <position position="139"/>
    </location>
    <ligand>
        <name>Ni(2+)</name>
        <dbReference type="ChEBI" id="CHEBI:49786"/>
        <label>1</label>
    </ligand>
</feature>
<feature type="binding site" evidence="1">
    <location>
        <position position="141"/>
    </location>
    <ligand>
        <name>Ni(2+)</name>
        <dbReference type="ChEBI" id="CHEBI:49786"/>
        <label>1</label>
    </ligand>
</feature>
<feature type="binding site" description="via carbamate group" evidence="1">
    <location>
        <position position="222"/>
    </location>
    <ligand>
        <name>Ni(2+)</name>
        <dbReference type="ChEBI" id="CHEBI:49786"/>
        <label>1</label>
    </ligand>
</feature>
<feature type="binding site" description="via carbamate group" evidence="1">
    <location>
        <position position="222"/>
    </location>
    <ligand>
        <name>Ni(2+)</name>
        <dbReference type="ChEBI" id="CHEBI:49786"/>
        <label>2</label>
    </ligand>
</feature>
<feature type="binding site" evidence="1">
    <location>
        <position position="224"/>
    </location>
    <ligand>
        <name>substrate</name>
    </ligand>
</feature>
<feature type="binding site" evidence="1">
    <location>
        <position position="251"/>
    </location>
    <ligand>
        <name>Ni(2+)</name>
        <dbReference type="ChEBI" id="CHEBI:49786"/>
        <label>2</label>
    </ligand>
</feature>
<feature type="binding site" evidence="1">
    <location>
        <position position="277"/>
    </location>
    <ligand>
        <name>Ni(2+)</name>
        <dbReference type="ChEBI" id="CHEBI:49786"/>
        <label>2</label>
    </ligand>
</feature>
<feature type="binding site" evidence="1">
    <location>
        <position position="365"/>
    </location>
    <ligand>
        <name>Ni(2+)</name>
        <dbReference type="ChEBI" id="CHEBI:49786"/>
        <label>1</label>
    </ligand>
</feature>
<feature type="modified residue" description="N6-carboxylysine" evidence="1">
    <location>
        <position position="222"/>
    </location>
</feature>
<organism>
    <name type="scientific">Synechococcus sp. (strain JA-2-3B'a(2-13))</name>
    <name type="common">Cyanobacteria bacterium Yellowstone B-Prime</name>
    <dbReference type="NCBI Taxonomy" id="321332"/>
    <lineage>
        <taxon>Bacteria</taxon>
        <taxon>Bacillati</taxon>
        <taxon>Cyanobacteriota</taxon>
        <taxon>Cyanophyceae</taxon>
        <taxon>Synechococcales</taxon>
        <taxon>Synechococcaceae</taxon>
        <taxon>Synechococcus</taxon>
    </lineage>
</organism>
<protein>
    <recommendedName>
        <fullName evidence="1">Urease subunit alpha</fullName>
        <ecNumber evidence="1">3.5.1.5</ecNumber>
    </recommendedName>
    <alternativeName>
        <fullName evidence="1">Urea amidohydrolase subunit alpha</fullName>
    </alternativeName>
</protein>
<proteinExistence type="inferred from homology"/>
<gene>
    <name evidence="1" type="primary">ureC</name>
    <name type="ordered locus">CYB_0023</name>
</gene>
<evidence type="ECO:0000255" key="1">
    <source>
        <dbReference type="HAMAP-Rule" id="MF_01953"/>
    </source>
</evidence>